<keyword id="KW-0963">Cytoplasm</keyword>
<keyword id="KW-0342">GTP-binding</keyword>
<keyword id="KW-0547">Nucleotide-binding</keyword>
<keyword id="KW-0597">Phosphoprotein</keyword>
<keyword id="KW-1185">Reference proteome</keyword>
<accession>D2XV59</accession>
<proteinExistence type="evidence at protein level"/>
<organism>
    <name type="scientific">Rattus norvegicus</name>
    <name type="common">Rat</name>
    <dbReference type="NCBI Taxonomy" id="10116"/>
    <lineage>
        <taxon>Eukaryota</taxon>
        <taxon>Metazoa</taxon>
        <taxon>Chordata</taxon>
        <taxon>Craniata</taxon>
        <taxon>Vertebrata</taxon>
        <taxon>Euteleostomi</taxon>
        <taxon>Mammalia</taxon>
        <taxon>Eutheria</taxon>
        <taxon>Euarchontoglires</taxon>
        <taxon>Glires</taxon>
        <taxon>Rodentia</taxon>
        <taxon>Myomorpha</taxon>
        <taxon>Muroidea</taxon>
        <taxon>Muridae</taxon>
        <taxon>Murinae</taxon>
        <taxon>Rattus</taxon>
    </lineage>
</organism>
<dbReference type="EMBL" id="GU256773">
    <property type="protein sequence ID" value="ADB22435.1"/>
    <property type="molecule type" value="mRNA"/>
</dbReference>
<dbReference type="EMBL" id="CH473950">
    <property type="protein sequence ID" value="EDM15787.1"/>
    <property type="molecule type" value="Genomic_DNA"/>
</dbReference>
<dbReference type="RefSeq" id="NP_001186244.1">
    <property type="nucleotide sequence ID" value="NM_001199315.1"/>
</dbReference>
<dbReference type="SMR" id="D2XV59"/>
<dbReference type="FunCoup" id="D2XV59">
    <property type="interactions" value="3260"/>
</dbReference>
<dbReference type="IntAct" id="D2XV59">
    <property type="interactions" value="3"/>
</dbReference>
<dbReference type="STRING" id="10116.ENSRNOP00000039165"/>
<dbReference type="GlyGen" id="D2XV59">
    <property type="glycosylation" value="1 site"/>
</dbReference>
<dbReference type="iPTMnet" id="D2XV59"/>
<dbReference type="PhosphoSitePlus" id="D2XV59"/>
<dbReference type="jPOST" id="D2XV59"/>
<dbReference type="PaxDb" id="10116-ENSRNOP00000039165"/>
<dbReference type="PeptideAtlas" id="D2XV59"/>
<dbReference type="Ensembl" id="ENSRNOT00000049247.5">
    <property type="protein sequence ID" value="ENSRNOP00000039165.4"/>
    <property type="gene ID" value="ENSRNOG00000014634.7"/>
</dbReference>
<dbReference type="GeneID" id="300077"/>
<dbReference type="KEGG" id="rno:300077"/>
<dbReference type="UCSC" id="RGD:1306758">
    <property type="organism name" value="rat"/>
</dbReference>
<dbReference type="AGR" id="RGD:1306758"/>
<dbReference type="CTD" id="9567"/>
<dbReference type="RGD" id="1306758">
    <property type="gene designation" value="Gtpbp1"/>
</dbReference>
<dbReference type="eggNOG" id="KOG0463">
    <property type="taxonomic scope" value="Eukaryota"/>
</dbReference>
<dbReference type="GeneTree" id="ENSGT00940000156054"/>
<dbReference type="HOGENOM" id="CLU_012821_2_0_1"/>
<dbReference type="InParanoid" id="D2XV59"/>
<dbReference type="OMA" id="FRFIQRP"/>
<dbReference type="OrthoDB" id="248233at2759"/>
<dbReference type="PRO" id="PR:D2XV59"/>
<dbReference type="Proteomes" id="UP000002494">
    <property type="component" value="Chromosome 7"/>
</dbReference>
<dbReference type="Proteomes" id="UP000234681">
    <property type="component" value="Chromosome 7"/>
</dbReference>
<dbReference type="Bgee" id="ENSRNOG00000014634">
    <property type="expression patterns" value="Expressed in skeletal muscle tissue and 18 other cell types or tissues"/>
</dbReference>
<dbReference type="GO" id="GO:0000177">
    <property type="term" value="C:cytoplasmic exosome (RNase complex)"/>
    <property type="evidence" value="ECO:0000314"/>
    <property type="project" value="UniProtKB"/>
</dbReference>
<dbReference type="GO" id="GO:0005829">
    <property type="term" value="C:cytosol"/>
    <property type="evidence" value="ECO:0000314"/>
    <property type="project" value="UniProtKB"/>
</dbReference>
<dbReference type="GO" id="GO:1904678">
    <property type="term" value="F:alpha-aminoacyl-tRNA binding"/>
    <property type="evidence" value="ECO:0000266"/>
    <property type="project" value="RGD"/>
</dbReference>
<dbReference type="GO" id="GO:0005525">
    <property type="term" value="F:GTP binding"/>
    <property type="evidence" value="ECO:0007669"/>
    <property type="project" value="UniProtKB-KW"/>
</dbReference>
<dbReference type="GO" id="GO:0003924">
    <property type="term" value="F:GTPase activity"/>
    <property type="evidence" value="ECO:0000314"/>
    <property type="project" value="UniProtKB"/>
</dbReference>
<dbReference type="GO" id="GO:0003746">
    <property type="term" value="F:translation elongation factor activity"/>
    <property type="evidence" value="ECO:0000266"/>
    <property type="project" value="RGD"/>
</dbReference>
<dbReference type="GO" id="GO:0000049">
    <property type="term" value="F:tRNA binding"/>
    <property type="evidence" value="ECO:0000266"/>
    <property type="project" value="RGD"/>
</dbReference>
<dbReference type="GO" id="GO:0002181">
    <property type="term" value="P:cytoplasmic translation"/>
    <property type="evidence" value="ECO:0000266"/>
    <property type="project" value="RGD"/>
</dbReference>
<dbReference type="GO" id="GO:0046039">
    <property type="term" value="P:GTP metabolic process"/>
    <property type="evidence" value="ECO:0000314"/>
    <property type="project" value="UniProtKB"/>
</dbReference>
<dbReference type="GO" id="GO:0061014">
    <property type="term" value="P:positive regulation of mRNA catabolic process"/>
    <property type="evidence" value="ECO:0000314"/>
    <property type="project" value="UniProtKB"/>
</dbReference>
<dbReference type="GO" id="GO:0006414">
    <property type="term" value="P:translational elongation"/>
    <property type="evidence" value="ECO:0000318"/>
    <property type="project" value="GO_Central"/>
</dbReference>
<dbReference type="CDD" id="cd04165">
    <property type="entry name" value="GTPBP1_like"/>
    <property type="match status" value="1"/>
</dbReference>
<dbReference type="CDD" id="cd03694">
    <property type="entry name" value="GTPBP_II"/>
    <property type="match status" value="1"/>
</dbReference>
<dbReference type="CDD" id="cd03708">
    <property type="entry name" value="GTPBP_III"/>
    <property type="match status" value="1"/>
</dbReference>
<dbReference type="FunFam" id="2.40.30.10:FF:000028">
    <property type="entry name" value="GTP-binding protein 1,-like"/>
    <property type="match status" value="1"/>
</dbReference>
<dbReference type="FunFam" id="2.40.30.10:FF:000014">
    <property type="entry name" value="Probable GTP-binding protein 1"/>
    <property type="match status" value="1"/>
</dbReference>
<dbReference type="FunFam" id="3.40.50.300:FF:000091">
    <property type="entry name" value="Probable GTP-binding protein 1"/>
    <property type="match status" value="1"/>
</dbReference>
<dbReference type="Gene3D" id="3.40.50.300">
    <property type="entry name" value="P-loop containing nucleotide triphosphate hydrolases"/>
    <property type="match status" value="1"/>
</dbReference>
<dbReference type="Gene3D" id="2.40.30.10">
    <property type="entry name" value="Translation factors"/>
    <property type="match status" value="2"/>
</dbReference>
<dbReference type="InterPro" id="IPR050055">
    <property type="entry name" value="EF-Tu_GTPase"/>
</dbReference>
<dbReference type="InterPro" id="IPR004161">
    <property type="entry name" value="EFTu-like_2"/>
</dbReference>
<dbReference type="InterPro" id="IPR035531">
    <property type="entry name" value="GTPBP1-like"/>
</dbReference>
<dbReference type="InterPro" id="IPR027417">
    <property type="entry name" value="P-loop_NTPase"/>
</dbReference>
<dbReference type="InterPro" id="IPR000795">
    <property type="entry name" value="T_Tr_GTP-bd_dom"/>
</dbReference>
<dbReference type="InterPro" id="IPR009000">
    <property type="entry name" value="Transl_B-barrel_sf"/>
</dbReference>
<dbReference type="InterPro" id="IPR009001">
    <property type="entry name" value="Transl_elong_EF1A/Init_IF2_C"/>
</dbReference>
<dbReference type="PANTHER" id="PTHR43721">
    <property type="entry name" value="ELONGATION FACTOR TU-RELATED"/>
    <property type="match status" value="1"/>
</dbReference>
<dbReference type="PANTHER" id="PTHR43721:SF9">
    <property type="entry name" value="GTP-BINDING PROTEIN 1"/>
    <property type="match status" value="1"/>
</dbReference>
<dbReference type="Pfam" id="PF00009">
    <property type="entry name" value="GTP_EFTU"/>
    <property type="match status" value="1"/>
</dbReference>
<dbReference type="Pfam" id="PF03144">
    <property type="entry name" value="GTP_EFTU_D2"/>
    <property type="match status" value="1"/>
</dbReference>
<dbReference type="SUPFAM" id="SSF50465">
    <property type="entry name" value="EF-Tu/eEF-1alpha/eIF2-gamma C-terminal domain"/>
    <property type="match status" value="1"/>
</dbReference>
<dbReference type="SUPFAM" id="SSF52540">
    <property type="entry name" value="P-loop containing nucleoside triphosphate hydrolases"/>
    <property type="match status" value="1"/>
</dbReference>
<dbReference type="SUPFAM" id="SSF50447">
    <property type="entry name" value="Translation proteins"/>
    <property type="match status" value="1"/>
</dbReference>
<dbReference type="PROSITE" id="PS51722">
    <property type="entry name" value="G_TR_2"/>
    <property type="match status" value="1"/>
</dbReference>
<reference key="1">
    <citation type="submission" date="2009-12" db="EMBL/GenBank/DDBJ databases">
        <authorList>
            <person name="Kim T.-D."/>
            <person name="Kim K.-T."/>
        </authorList>
    </citation>
    <scope>NUCLEOTIDE SEQUENCE [MRNA]</scope>
</reference>
<reference key="2">
    <citation type="submission" date="2005-09" db="EMBL/GenBank/DDBJ databases">
        <authorList>
            <person name="Mural R.J."/>
            <person name="Adams M.D."/>
            <person name="Myers E.W."/>
            <person name="Smith H.O."/>
            <person name="Venter J.C."/>
        </authorList>
    </citation>
    <scope>NUCLEOTIDE SEQUENCE [LARGE SCALE GENOMIC DNA]</scope>
    <source>
        <strain>Brown Norway</strain>
    </source>
</reference>
<reference key="3">
    <citation type="journal article" date="2011" name="FASEB J.">
        <title>Modulation of exosome-mediated mRNA turnover by interaction of GTP-binding protein 1 (GTPBP1) with its target mRNAs.</title>
        <authorList>
            <person name="Woo K.C."/>
            <person name="Kim T.D."/>
            <person name="Lee K.H."/>
            <person name="Kim D.Y."/>
            <person name="Kim S."/>
            <person name="Lee H.R."/>
            <person name="Kang H.J."/>
            <person name="Chung S.J."/>
            <person name="Senju S."/>
            <person name="Nishimura Y."/>
            <person name="Kim K.T."/>
        </authorList>
    </citation>
    <scope>FUNCTION</scope>
    <scope>IDENTIFICATION BY MASS SPECTROMETRY</scope>
    <scope>INTERACTION WITH HNRNPD; HNRNPR; SYNCRIP; EXOSC2; EXOSC3 AND EXOSC5</scope>
    <scope>IDENTIFICATION IN A COMPLEX WITH HNRNPD; HNRNPL; HNRNPQ; HNRNPR; HNRNPU AND MRNA</scope>
    <scope>GTP BINDING</scope>
    <scope>GTPASE ACTIVITY</scope>
    <scope>SUBCELLULAR LOCATION</scope>
    <scope>MUTAGENESIS OF LYS-173 AND 173-LYS-SER-174</scope>
    <scope>TISSUE SPECIFICITY</scope>
</reference>
<reference key="4">
    <citation type="journal article" date="2012" name="Nat. Commun.">
        <title>Quantitative maps of protein phosphorylation sites across 14 different rat organs and tissues.</title>
        <authorList>
            <person name="Lundby A."/>
            <person name="Secher A."/>
            <person name="Lage K."/>
            <person name="Nordsborg N.B."/>
            <person name="Dmytriyev A."/>
            <person name="Lundby C."/>
            <person name="Olsen J.V."/>
        </authorList>
    </citation>
    <scope>PHOSPHORYLATION [LARGE SCALE ANALYSIS] AT SER-12; SER-44; SER-47; SER-69 AND SER-580</scope>
    <scope>IDENTIFICATION BY MASS SPECTROMETRY [LARGE SCALE ANALYSIS]</scope>
</reference>
<feature type="chain" id="PRO_0000412470" description="GTP-binding protein 1">
    <location>
        <begin position="1"/>
        <end position="669"/>
    </location>
</feature>
<feature type="domain" description="tr-type G" evidence="4">
    <location>
        <begin position="158"/>
        <end position="389"/>
    </location>
</feature>
<feature type="region of interest" description="Disordered" evidence="5">
    <location>
        <begin position="1"/>
        <end position="32"/>
    </location>
</feature>
<feature type="region of interest" description="G1" evidence="4">
    <location>
        <begin position="167"/>
        <end position="174"/>
    </location>
</feature>
<feature type="region of interest" description="G2" evidence="4">
    <location>
        <begin position="206"/>
        <end position="210"/>
    </location>
</feature>
<feature type="region of interest" description="G3" evidence="4">
    <location>
        <begin position="252"/>
        <end position="255"/>
    </location>
</feature>
<feature type="region of interest" description="G4" evidence="4">
    <location>
        <begin position="308"/>
        <end position="311"/>
    </location>
</feature>
<feature type="region of interest" description="G5" evidence="4">
    <location>
        <begin position="366"/>
        <end position="368"/>
    </location>
</feature>
<feature type="region of interest" description="Disordered" evidence="5">
    <location>
        <begin position="573"/>
        <end position="669"/>
    </location>
</feature>
<feature type="compositionally biased region" description="Polar residues" evidence="5">
    <location>
        <begin position="573"/>
        <end position="595"/>
    </location>
</feature>
<feature type="compositionally biased region" description="Polar residues" evidence="5">
    <location>
        <begin position="620"/>
        <end position="637"/>
    </location>
</feature>
<feature type="compositionally biased region" description="Basic residues" evidence="5">
    <location>
        <begin position="646"/>
        <end position="657"/>
    </location>
</feature>
<feature type="binding site" evidence="3">
    <location>
        <begin position="167"/>
        <end position="174"/>
    </location>
    <ligand>
        <name>GTP</name>
        <dbReference type="ChEBI" id="CHEBI:37565"/>
    </ligand>
</feature>
<feature type="binding site" evidence="3">
    <location>
        <begin position="252"/>
        <end position="256"/>
    </location>
    <ligand>
        <name>GTP</name>
        <dbReference type="ChEBI" id="CHEBI:37565"/>
    </ligand>
</feature>
<feature type="binding site" evidence="3">
    <location>
        <begin position="308"/>
        <end position="311"/>
    </location>
    <ligand>
        <name>GTP</name>
        <dbReference type="ChEBI" id="CHEBI:37565"/>
    </ligand>
</feature>
<feature type="modified residue" description="Phosphoserine" evidence="2">
    <location>
        <position position="6"/>
    </location>
</feature>
<feature type="modified residue" description="Phosphoserine" evidence="2">
    <location>
        <position position="8"/>
    </location>
</feature>
<feature type="modified residue" description="Phosphoserine" evidence="7">
    <location>
        <position position="12"/>
    </location>
</feature>
<feature type="modified residue" description="Phosphoserine" evidence="2">
    <location>
        <position position="24"/>
    </location>
</feature>
<feature type="modified residue" description="Phosphoserine" evidence="1">
    <location>
        <position position="25"/>
    </location>
</feature>
<feature type="modified residue" description="Phosphoserine" evidence="7">
    <location>
        <position position="44"/>
    </location>
</feature>
<feature type="modified residue" description="Phosphoserine" evidence="7">
    <location>
        <position position="47"/>
    </location>
</feature>
<feature type="modified residue" description="Phosphoserine" evidence="7">
    <location>
        <position position="69"/>
    </location>
</feature>
<feature type="modified residue" description="Phosphoserine" evidence="7">
    <location>
        <position position="580"/>
    </location>
</feature>
<feature type="mutagenesis site" description="Reduced decay of target mRNA. Slightly reduced GTPase activity. No effect on GTP binding." evidence="6">
    <original>KS</original>
    <variation>AA</variation>
    <location>
        <begin position="173"/>
        <end position="174"/>
    </location>
</feature>
<feature type="mutagenesis site" description="Reduced decay of target mRNA. No effect on GTP binding." evidence="6">
    <original>K</original>
    <variation>A</variation>
    <location>
        <position position="173"/>
    </location>
</feature>
<feature type="mutagenesis site" description="Reduced decay of target mRNA. Reduced GTPase activity." evidence="6">
    <original>K</original>
    <variation>E</variation>
    <location>
        <position position="173"/>
    </location>
</feature>
<comment type="function">
    <text evidence="6">Promotes degradation of target mRNA species. Plays a role in the regulation of circadian mRNA stability. Binds GTP and has GTPase activity.</text>
</comment>
<comment type="subunit">
    <text evidence="6">Interacts with EXOSC2/RRP4, EXOSC3/RRP40, EXOSC5/RRP46, HNRNPD, HNRNPR and SYNCRIP. Identified in a complex with HNRNPD, HNRNPL, HNRNPQ, HNRNPR, HNRNPU and AANAT mRNA, but does not bind mRNA by itself.</text>
</comment>
<comment type="subcellular location">
    <subcellularLocation>
        <location evidence="6">Cytoplasm</location>
    </subcellularLocation>
</comment>
<comment type="tissue specificity">
    <text evidence="6">Detected in pineal gland (at protein level).</text>
</comment>
<comment type="similarity">
    <text evidence="4">Belongs to the TRAFAC class translation factor GTPase superfamily. Classic translation factor GTPase family. GTPBP1 subfamily.</text>
</comment>
<evidence type="ECO:0000250" key="1">
    <source>
        <dbReference type="UniProtKB" id="O00178"/>
    </source>
</evidence>
<evidence type="ECO:0000250" key="2">
    <source>
        <dbReference type="UniProtKB" id="O08582"/>
    </source>
</evidence>
<evidence type="ECO:0000255" key="3"/>
<evidence type="ECO:0000255" key="4">
    <source>
        <dbReference type="PROSITE-ProRule" id="PRU01059"/>
    </source>
</evidence>
<evidence type="ECO:0000256" key="5">
    <source>
        <dbReference type="SAM" id="MobiDB-lite"/>
    </source>
</evidence>
<evidence type="ECO:0000269" key="6">
    <source>
    </source>
</evidence>
<evidence type="ECO:0007744" key="7">
    <source>
    </source>
</evidence>
<gene>
    <name type="primary">Gtpbp1</name>
</gene>
<protein>
    <recommendedName>
        <fullName>GTP-binding protein 1</fullName>
    </recommendedName>
</protein>
<sequence>MAAERSRSPVDSPVPASMFAPEPSSPGAARAAAAAARLHGGFDSDCSEDGEALNGEPELDLTSKLVLVSPTSEQYDSLLRQMWERMDEGCGETIYVIGQGSDGTEYGLSEADMEASYATVKSMAEQIEADVILLRERQESGGRVRDYLVRKRVGDNDFLEVRVAVVGNVDAGKSTLLGVLTHGELDNGRGFARQKLFRHKHEIESGRTSSVGNDILGFDSEGNVVNKPDSHGGSLEWTKICEKSSKVITFIDLAGHEKYLKTTVFGMTGHLPDFCMLMVGSNAGIVGMTKEHLGLALALNVPVFVVVTKIDMCPANILQETLKLLQRLLKSPGCRKIPVLVQSKDDVIVTASNFSSERMCPIFQISNVTGENLDLLKMFLNLLSPRTSYREEEPAEFQIDDTYSVPGVGTVVSGTTLRGLIKLNDTLLLGPDPLGNFLSIAVKSIHRKRMPVKEVRGGQTASFALKKIKRSSIRKGMVMVSPRLNPQASWEFEAEILVLHHPTTISPRYQAMVHCGSIRQTATILSMDKDCLRTGDKATVHFRFIKTPEYLHIDQRLVFREGRTKAVGTITKLLQTTNNSPMNSKPQQIKMQSTKKGPLSKREEGGPSGVPAAGPPSTGDEASSLGTTQAATSSGLQPQPKPSSGGRRRGGQRHKVKSQGACVTPASGC</sequence>
<name>GTPB1_RAT</name>